<proteinExistence type="evidence at protein level"/>
<sequence length="148" mass="16337">MRAYHPTPATKTRALWREIGLPASRGTVLVDSIKMGFSVDVIDSIHLWASIPKAEILRATGIPSRSLTRRRTHDGRFTPEESERIARFVRVMDAAVDLFGGDKGKAITWMSTPIKGLGHRSPDSLLETETGALEVCDLIGRLEHGVFS</sequence>
<name>XRE_YERE8</name>
<comment type="function">
    <text evidence="2">Antitoxin component of a type II toxin-antitoxin (TA) system. Neutralizes the activity of cognate toxin Res.</text>
</comment>
<comment type="subunit">
    <text evidence="1">Homodimer. Forms a complex with cognate toxin Rse.</text>
</comment>
<comment type="similarity">
    <text evidence="4">Belongs to the MbcA/ParS/Xre antitoxin family.</text>
</comment>
<evidence type="ECO:0000250" key="1">
    <source>
        <dbReference type="UniProtKB" id="Q88K58"/>
    </source>
</evidence>
<evidence type="ECO:0000269" key="2">
    <source>
    </source>
</evidence>
<evidence type="ECO:0000303" key="3">
    <source>
    </source>
</evidence>
<evidence type="ECO:0000305" key="4"/>
<reference key="1">
    <citation type="journal article" date="2006" name="PLoS Genet.">
        <title>The complete genome sequence and comparative genome analysis of the high pathogenicity Yersinia enterocolitica strain 8081.</title>
        <authorList>
            <person name="Thomson N.R."/>
            <person name="Howard S."/>
            <person name="Wren B.W."/>
            <person name="Holden M.T.G."/>
            <person name="Crossman L."/>
            <person name="Challis G.L."/>
            <person name="Churcher C."/>
            <person name="Mungall K."/>
            <person name="Brooks K."/>
            <person name="Chillingworth T."/>
            <person name="Feltwell T."/>
            <person name="Abdellah Z."/>
            <person name="Hauser H."/>
            <person name="Jagels K."/>
            <person name="Maddison M."/>
            <person name="Moule S."/>
            <person name="Sanders M."/>
            <person name="Whitehead S."/>
            <person name="Quail M.A."/>
            <person name="Dougan G."/>
            <person name="Parkhill J."/>
            <person name="Prentice M.B."/>
        </authorList>
    </citation>
    <scope>NUCLEOTIDE SEQUENCE [LARGE SCALE GENOMIC DNA]</scope>
    <source>
        <strain>NCTC 13174 / 8081</strain>
    </source>
</reference>
<reference key="2">
    <citation type="journal article" date="2019" name="Mol. Microbiol.">
        <title>The RES domain toxins of RES-Xre toxin-antitoxin modules induce cell stasis by degrading NAD+.</title>
        <authorList>
            <person name="Skjerning R.B."/>
            <person name="Senissar M."/>
            <person name="Winther K.S."/>
            <person name="Gerdes K."/>
            <person name="Brodersen D.E."/>
        </authorList>
    </citation>
    <scope>FUNCTION AS AN ANTITOXIN</scope>
    <scope>EXPRESSION IN E.COLI</scope>
    <source>
        <strain>NCTC 13174 / 8081</strain>
    </source>
</reference>
<accession>A1JNG6</accession>
<dbReference type="EMBL" id="AM286415">
    <property type="protein sequence ID" value="CAL12185.1"/>
    <property type="molecule type" value="Genomic_DNA"/>
</dbReference>
<dbReference type="RefSeq" id="WP_005169556.1">
    <property type="nucleotide sequence ID" value="NC_008800.1"/>
</dbReference>
<dbReference type="RefSeq" id="YP_001006355.1">
    <property type="nucleotide sequence ID" value="NC_008800.1"/>
</dbReference>
<dbReference type="SMR" id="A1JNG6"/>
<dbReference type="KEGG" id="yen:YE2115"/>
<dbReference type="PATRIC" id="fig|393305.7.peg.2277"/>
<dbReference type="eggNOG" id="COG5642">
    <property type="taxonomic scope" value="Bacteria"/>
</dbReference>
<dbReference type="HOGENOM" id="CLU_109353_3_0_6"/>
<dbReference type="OrthoDB" id="8595277at2"/>
<dbReference type="Proteomes" id="UP000000642">
    <property type="component" value="Chromosome"/>
</dbReference>
<dbReference type="GO" id="GO:0003677">
    <property type="term" value="F:DNA binding"/>
    <property type="evidence" value="ECO:0007669"/>
    <property type="project" value="InterPro"/>
</dbReference>
<dbReference type="InterPro" id="IPR011979">
    <property type="entry name" value="Antitox_Xre"/>
</dbReference>
<dbReference type="InterPro" id="IPR046847">
    <property type="entry name" value="Xre-like_HTH"/>
</dbReference>
<dbReference type="InterPro" id="IPR024467">
    <property type="entry name" value="Xre/MbcA/ParS-like_toxin-bd"/>
</dbReference>
<dbReference type="NCBIfam" id="TIGR02293">
    <property type="entry name" value="TAS_TIGR02293"/>
    <property type="match status" value="1"/>
</dbReference>
<dbReference type="Pfam" id="PF20432">
    <property type="entry name" value="Xre-like-HTH"/>
    <property type="match status" value="1"/>
</dbReference>
<dbReference type="Pfam" id="PF09722">
    <property type="entry name" value="Xre_MbcA_ParS_C"/>
    <property type="match status" value="1"/>
</dbReference>
<organism>
    <name type="scientific">Yersinia enterocolitica serotype O:8 / biotype 1B (strain NCTC 13174 / 8081)</name>
    <dbReference type="NCBI Taxonomy" id="393305"/>
    <lineage>
        <taxon>Bacteria</taxon>
        <taxon>Pseudomonadati</taxon>
        <taxon>Pseudomonadota</taxon>
        <taxon>Gammaproteobacteria</taxon>
        <taxon>Enterobacterales</taxon>
        <taxon>Yersiniaceae</taxon>
        <taxon>Yersinia</taxon>
    </lineage>
</organism>
<keyword id="KW-1277">Toxin-antitoxin system</keyword>
<protein>
    <recommendedName>
        <fullName evidence="3">Antitoxin Xre</fullName>
    </recommendedName>
</protein>
<gene>
    <name evidence="3" type="primary">xre</name>
    <name type="ordered locus">YE2115</name>
</gene>
<feature type="chain" id="PRO_0000448603" description="Antitoxin Xre">
    <location>
        <begin position="1"/>
        <end position="148"/>
    </location>
</feature>